<accession>Q5XPI3</accession>
<accession>Q6PGE0</accession>
<comment type="function">
    <text evidence="2">Catalytic subunit of the KPC complex that acts as E3 ubiquitin-protein ligase. Promotes the ubiquitination and proteasome-mediated degradation of CDKN1B which is the cyclin-dependent kinase inhibitor at the G0-G1 transition of the cell cycle. Also acts as a key regulator of the NF-kappa-B signaling by promoting maturation of the NFKB1 component of NF-kappa-B: acts by catalyzing ubiquitination of the NFKB1 p105 precursor, leading to limited proteasomal degradation of NFKB1 p105 and generation of the active NFKB1 p50 subunit. Functions also as an inhibitor of innate antiviral signaling mediated by RIGI and IFIH1 independently of its E3 ligase activity. Interacts with the N-terminal CARD domains of RIGI and IFIH1 and competes with the downstream adapter MAVS.</text>
</comment>
<comment type="catalytic activity">
    <reaction evidence="2">
        <text>S-ubiquitinyl-[E2 ubiquitin-conjugating enzyme]-L-cysteine + [acceptor protein]-L-lysine = [E2 ubiquitin-conjugating enzyme]-L-cysteine + N(6)-ubiquitinyl-[acceptor protein]-L-lysine.</text>
        <dbReference type="EC" id="2.3.2.27"/>
    </reaction>
</comment>
<comment type="pathway">
    <text evidence="2">Protein modification; protein ubiquitination.</text>
</comment>
<comment type="subunit">
    <text evidence="2">Component of the KPC complex composed of RNF123/KPC1 and UBAC1/KPC2. Interacts with UBAC1 and CDKN1B via its N-terminal domain. Interacts with RIGI (via N-terminus) and IFIH1 (via N-terminus).</text>
</comment>
<comment type="subcellular location">
    <subcellularLocation>
        <location evidence="2">Cytoplasm</location>
    </subcellularLocation>
</comment>
<comment type="alternative products">
    <event type="alternative splicing"/>
    <isoform>
        <id>Q5XPI3-1</id>
        <name>1</name>
        <sequence type="displayed"/>
    </isoform>
    <isoform>
        <id>Q5XPI3-2</id>
        <name>2</name>
        <sequence type="described" ref="VSP_020651"/>
    </isoform>
</comment>
<comment type="PTM">
    <text evidence="1">Ubiquitinated, leading to its degradation. Deubiquitinated by USP19, thereby stimulating CDKN1B ubiquitin-dependent degradation.</text>
</comment>
<sequence length="1314" mass="148652">MASKGTGMSFSRKSYRLTSDAEKSRVTGIVQEKLLSDYLYRIFSPPDRGPAAATSRKPLNFHNLPEHVDQLLQVDSEDNESQGQVEGRLGPSTVVLDHTGGFEGLLLVDDDLLGVIGHSNFGTIRSTTCVYKGKWVYEVLISSQGLMQIGWCTINCRFNQEEGVGDTHNSYAYDGNRVRKWNVTTTNYGKAWAAGDIVSCLIDLDDGTLSFCLNGVSLGTAFENLSRGLGMAYFPAISLSFKESVAFNFGSRPLRYPVAGFRPLQDPPFADLVRAQRLLGCFQAVLSVELDPVEGRLVETESSEWQLQGQPTVLLTLAHIFHHFAPLLRKVYLVEAVLMSFLLGVVEKGTPEQAQSVVHQILDLLWLFMEDYEVQDCLKQLMMSLLRLYRFSPIVPDLGLQIHYLRLTMSILRHEKSRKFLLSNVLFDMLRSVVFFYIKSPLRVEEAGLKELIPTTWWPHRSSRESRDGKEAREETTEERQRRRAYERGCQRLKKRIEVVEELQVQILKLLLDNKDDNGGEASRYIFLTKFRKFLQENASGRGNTPVLCPPEYMVCFLHRLVSALRFYWDEYKASNPRASFSEEAYIPPQIFYNGKVDYFDLQRLGGLLSHLRKTLKDDLASKANIVIDPLELQAATMDDLDEDEEPAPSAAQRPMQALAIGGALPLPRPGWLSSPTLGRANRFLSTAAVSLMTPRRLLSTMEKVKVRSLNVEQRTREDIEGSHWNEGLLLGRPPEEPEQPLTENSLLEVLDGTVMMYNLSVHQQLGKMVGVSDDVNEYAMALRDTEDKLRRCPKRRKDILAELTKSQKVFSEKLDHLSRRLAWVHATVYSQEKMLDIYWLLRVCLRTIEHGDRTGSLFAFMPEFYLSVAINSYSALKNYFGPVHSMEELPGYEETLTRLAAILAKHFADPRIVGTDIRDSLMQALASYVCYPHSLRAVERIPEEQRIAMVRNLLAPYEQRPWAQTNWILVRLWRGCGFGYRYTRLPHLLKTKPEDANLPSLQKPCPSTLLQQHMADLLRQGSDVAPSFLNSVLNQLNWAFSEFIGMIQEIQQAAERLERNFVDSRQLKVCATCFDLSVSLLRVLEMTITLVPEIFLDWSRPTSEMLLRRLAQLLNQVLNRVTAERNLFDRVVTLRLPGLESVDHYPILVAVTGILVRLLVHGPTSETEQATSVLLADPCFQLRSICYLLGQPEPLAPGTTLPAPDRKRFSLQSYTDYISAEELAQVEQMLAHLTAASAQAAAASLPTNEEDLCPICYAHPISAVFQPCGHKSCKACINQHLMNNKDCFFCKATIVSVEDWDKAANTSAMSSAA</sequence>
<dbReference type="EC" id="2.3.2.27" evidence="2"/>
<dbReference type="EMBL" id="AY744153">
    <property type="protein sequence ID" value="AAU93471.1"/>
    <property type="molecule type" value="mRNA"/>
</dbReference>
<dbReference type="EMBL" id="BC057082">
    <property type="protein sequence ID" value="AAH57082.1"/>
    <property type="molecule type" value="mRNA"/>
</dbReference>
<dbReference type="CCDS" id="CCDS52922.1">
    <molecule id="Q5XPI3-1"/>
</dbReference>
<dbReference type="CCDS" id="CCDS81072.1">
    <molecule id="Q5XPI3-2"/>
</dbReference>
<dbReference type="RefSeq" id="NP_001298081.1">
    <molecule id="Q5XPI3-2"/>
    <property type="nucleotide sequence ID" value="NM_001311152.2"/>
</dbReference>
<dbReference type="RefSeq" id="NP_001408507.1">
    <molecule id="Q5XPI3-2"/>
    <property type="nucleotide sequence ID" value="NM_001421578.1"/>
</dbReference>
<dbReference type="RefSeq" id="NP_001408508.1">
    <molecule id="Q5XPI3-1"/>
    <property type="nucleotide sequence ID" value="NM_001421579.1"/>
</dbReference>
<dbReference type="RefSeq" id="NP_115932.1">
    <molecule id="Q5XPI3-1"/>
    <property type="nucleotide sequence ID" value="NM_032543.3"/>
</dbReference>
<dbReference type="RefSeq" id="XP_006511940.1">
    <property type="nucleotide sequence ID" value="XM_006511877.3"/>
</dbReference>
<dbReference type="RefSeq" id="XP_006511941.1">
    <molecule id="Q5XPI3-2"/>
    <property type="nucleotide sequence ID" value="XM_006511878.4"/>
</dbReference>
<dbReference type="RefSeq" id="XP_006511942.1">
    <molecule id="Q5XPI3-2"/>
    <property type="nucleotide sequence ID" value="XM_006511879.5"/>
</dbReference>
<dbReference type="RefSeq" id="XP_017169196.1">
    <property type="nucleotide sequence ID" value="XM_017313707.1"/>
</dbReference>
<dbReference type="SMR" id="Q5XPI3"/>
<dbReference type="BioGRID" id="220011">
    <property type="interactions" value="17"/>
</dbReference>
<dbReference type="FunCoup" id="Q5XPI3">
    <property type="interactions" value="1978"/>
</dbReference>
<dbReference type="STRING" id="10090.ENSMUSP00000125745"/>
<dbReference type="GlyGen" id="Q5XPI3">
    <property type="glycosylation" value="3 sites, 2 N-linked glycans (2 sites), 1 O-linked glycan (1 site)"/>
</dbReference>
<dbReference type="iPTMnet" id="Q5XPI3"/>
<dbReference type="PhosphoSitePlus" id="Q5XPI3"/>
<dbReference type="SwissPalm" id="Q5XPI3"/>
<dbReference type="jPOST" id="Q5XPI3"/>
<dbReference type="PaxDb" id="10090-ENSMUSP00000125745"/>
<dbReference type="ProteomicsDB" id="300531">
    <molecule id="Q5XPI3-1"/>
</dbReference>
<dbReference type="ProteomicsDB" id="300532">
    <molecule id="Q5XPI3-2"/>
</dbReference>
<dbReference type="Pumba" id="Q5XPI3"/>
<dbReference type="Antibodypedia" id="30603">
    <property type="antibodies" value="106 antibodies from 19 providers"/>
</dbReference>
<dbReference type="DNASU" id="84585"/>
<dbReference type="Ensembl" id="ENSMUST00000160249.8">
    <molecule id="Q5XPI3-1"/>
    <property type="protein sequence ID" value="ENSMUSP00000124548.2"/>
    <property type="gene ID" value="ENSMUSG00000041528.17"/>
</dbReference>
<dbReference type="Ensembl" id="ENSMUST00000160649.9">
    <molecule id="Q5XPI3-1"/>
    <property type="protein sequence ID" value="ENSMUSP00000125495.3"/>
    <property type="gene ID" value="ENSMUSG00000041528.17"/>
</dbReference>
<dbReference type="Ensembl" id="ENSMUST00000162355.8">
    <molecule id="Q5XPI3-2"/>
    <property type="protein sequence ID" value="ENSMUSP00000125745.2"/>
    <property type="gene ID" value="ENSMUSG00000041528.17"/>
</dbReference>
<dbReference type="Ensembl" id="ENSMUST00000178267.8">
    <molecule id="Q5XPI3-1"/>
    <property type="protein sequence ID" value="ENSMUSP00000136953.2"/>
    <property type="gene ID" value="ENSMUSG00000041528.17"/>
</dbReference>
<dbReference type="GeneID" id="84585"/>
<dbReference type="KEGG" id="mmu:84585"/>
<dbReference type="UCSC" id="uc009roi.3">
    <molecule id="Q5XPI3-2"/>
    <property type="organism name" value="mouse"/>
</dbReference>
<dbReference type="UCSC" id="uc033jmw.1">
    <molecule id="Q5XPI3-1"/>
    <property type="organism name" value="mouse"/>
</dbReference>
<dbReference type="AGR" id="MGI:2148796"/>
<dbReference type="CTD" id="63891"/>
<dbReference type="MGI" id="MGI:2148796">
    <property type="gene designation" value="Rnf123"/>
</dbReference>
<dbReference type="VEuPathDB" id="HostDB:ENSMUSG00000041528"/>
<dbReference type="eggNOG" id="KOG2242">
    <property type="taxonomic scope" value="Eukaryota"/>
</dbReference>
<dbReference type="eggNOG" id="KOG4692">
    <property type="taxonomic scope" value="Eukaryota"/>
</dbReference>
<dbReference type="GeneTree" id="ENSGT00940000155781"/>
<dbReference type="HOGENOM" id="CLU_006687_2_0_1"/>
<dbReference type="InParanoid" id="Q5XPI3"/>
<dbReference type="OMA" id="LCCFHRL"/>
<dbReference type="PhylomeDB" id="Q5XPI3"/>
<dbReference type="TreeFam" id="TF313546"/>
<dbReference type="Reactome" id="R-MMU-5689880">
    <property type="pathway name" value="Ub-specific processing proteases"/>
</dbReference>
<dbReference type="Reactome" id="R-MMU-983168">
    <property type="pathway name" value="Antigen processing: Ubiquitination &amp; Proteasome degradation"/>
</dbReference>
<dbReference type="UniPathway" id="UPA00143"/>
<dbReference type="BioGRID-ORCS" id="84585">
    <property type="hits" value="1 hit in 78 CRISPR screens"/>
</dbReference>
<dbReference type="ChiTaRS" id="Rnf123">
    <property type="organism name" value="mouse"/>
</dbReference>
<dbReference type="PRO" id="PR:Q5XPI3"/>
<dbReference type="Proteomes" id="UP000000589">
    <property type="component" value="Chromosome 9"/>
</dbReference>
<dbReference type="RNAct" id="Q5XPI3">
    <property type="molecule type" value="protein"/>
</dbReference>
<dbReference type="Bgee" id="ENSMUSG00000041528">
    <property type="expression patterns" value="Expressed in retinal neural layer and 250 other cell types or tissues"/>
</dbReference>
<dbReference type="ExpressionAtlas" id="Q5XPI3">
    <property type="expression patterns" value="baseline and differential"/>
</dbReference>
<dbReference type="GO" id="GO:0005737">
    <property type="term" value="C:cytoplasm"/>
    <property type="evidence" value="ECO:0000250"/>
    <property type="project" value="UniProtKB"/>
</dbReference>
<dbReference type="GO" id="GO:0005829">
    <property type="term" value="C:cytosol"/>
    <property type="evidence" value="ECO:0007669"/>
    <property type="project" value="Ensembl"/>
</dbReference>
<dbReference type="GO" id="GO:0031965">
    <property type="term" value="C:nuclear membrane"/>
    <property type="evidence" value="ECO:0007669"/>
    <property type="project" value="Ensembl"/>
</dbReference>
<dbReference type="GO" id="GO:0061630">
    <property type="term" value="F:ubiquitin protein ligase activity"/>
    <property type="evidence" value="ECO:0000250"/>
    <property type="project" value="UniProtKB"/>
</dbReference>
<dbReference type="GO" id="GO:0008270">
    <property type="term" value="F:zinc ion binding"/>
    <property type="evidence" value="ECO:0007669"/>
    <property type="project" value="UniProtKB-KW"/>
</dbReference>
<dbReference type="GO" id="GO:0051604">
    <property type="term" value="P:protein maturation"/>
    <property type="evidence" value="ECO:0000250"/>
    <property type="project" value="UniProtKB"/>
</dbReference>
<dbReference type="GO" id="GO:0000209">
    <property type="term" value="P:protein polyubiquitination"/>
    <property type="evidence" value="ECO:0007669"/>
    <property type="project" value="Ensembl"/>
</dbReference>
<dbReference type="GO" id="GO:0006511">
    <property type="term" value="P:ubiquitin-dependent protein catabolic process"/>
    <property type="evidence" value="ECO:0000250"/>
    <property type="project" value="UniProtKB"/>
</dbReference>
<dbReference type="CDD" id="cd16541">
    <property type="entry name" value="RING-HC_RNF123"/>
    <property type="match status" value="1"/>
</dbReference>
<dbReference type="CDD" id="cd12882">
    <property type="entry name" value="SPRY_RNF123"/>
    <property type="match status" value="1"/>
</dbReference>
<dbReference type="FunFam" id="2.60.120.920:FF:000031">
    <property type="entry name" value="E3 ubiquitin-protein ligase RNF123"/>
    <property type="match status" value="1"/>
</dbReference>
<dbReference type="FunFam" id="3.30.40.10:FF:000133">
    <property type="entry name" value="E3 ubiquitin-protein ligase RNF123"/>
    <property type="match status" value="1"/>
</dbReference>
<dbReference type="Gene3D" id="2.60.120.920">
    <property type="match status" value="1"/>
</dbReference>
<dbReference type="Gene3D" id="3.30.40.10">
    <property type="entry name" value="Zinc/RING finger domain, C3HC4 (zinc finger)"/>
    <property type="match status" value="1"/>
</dbReference>
<dbReference type="InterPro" id="IPR001870">
    <property type="entry name" value="B30.2/SPRY"/>
</dbReference>
<dbReference type="InterPro" id="IPR043136">
    <property type="entry name" value="B30.2/SPRY_sf"/>
</dbReference>
<dbReference type="InterPro" id="IPR013320">
    <property type="entry name" value="ConA-like_dom_sf"/>
</dbReference>
<dbReference type="InterPro" id="IPR045129">
    <property type="entry name" value="RNF123/RSPRY1-like"/>
</dbReference>
<dbReference type="InterPro" id="IPR003877">
    <property type="entry name" value="SPRY_dom"/>
</dbReference>
<dbReference type="InterPro" id="IPR035773">
    <property type="entry name" value="SPRY_RNF123"/>
</dbReference>
<dbReference type="InterPro" id="IPR001841">
    <property type="entry name" value="Znf_RING"/>
</dbReference>
<dbReference type="InterPro" id="IPR013083">
    <property type="entry name" value="Znf_RING/FYVE/PHD"/>
</dbReference>
<dbReference type="PANTHER" id="PTHR13363:SF5">
    <property type="entry name" value="E3 UBIQUITIN-PROTEIN LIGASE RNF123"/>
    <property type="match status" value="1"/>
</dbReference>
<dbReference type="PANTHER" id="PTHR13363">
    <property type="entry name" value="RING FINGER AND SRY DOMAIN-CONTAINING"/>
    <property type="match status" value="1"/>
</dbReference>
<dbReference type="Pfam" id="PF00622">
    <property type="entry name" value="SPRY"/>
    <property type="match status" value="1"/>
</dbReference>
<dbReference type="Pfam" id="PF13920">
    <property type="entry name" value="zf-C3HC4_3"/>
    <property type="match status" value="1"/>
</dbReference>
<dbReference type="SMART" id="SM00184">
    <property type="entry name" value="RING"/>
    <property type="match status" value="1"/>
</dbReference>
<dbReference type="SMART" id="SM00449">
    <property type="entry name" value="SPRY"/>
    <property type="match status" value="1"/>
</dbReference>
<dbReference type="SUPFAM" id="SSF49899">
    <property type="entry name" value="Concanavalin A-like lectins/glucanases"/>
    <property type="match status" value="1"/>
</dbReference>
<dbReference type="SUPFAM" id="SSF57850">
    <property type="entry name" value="RING/U-box"/>
    <property type="match status" value="1"/>
</dbReference>
<dbReference type="PROSITE" id="PS50188">
    <property type="entry name" value="B302_SPRY"/>
    <property type="match status" value="1"/>
</dbReference>
<dbReference type="PROSITE" id="PS50089">
    <property type="entry name" value="ZF_RING_2"/>
    <property type="match status" value="1"/>
</dbReference>
<gene>
    <name type="primary">Rnf123</name>
    <name evidence="7" type="synonym">Kpc1</name>
</gene>
<organism>
    <name type="scientific">Mus musculus</name>
    <name type="common">Mouse</name>
    <dbReference type="NCBI Taxonomy" id="10090"/>
    <lineage>
        <taxon>Eukaryota</taxon>
        <taxon>Metazoa</taxon>
        <taxon>Chordata</taxon>
        <taxon>Craniata</taxon>
        <taxon>Vertebrata</taxon>
        <taxon>Euteleostomi</taxon>
        <taxon>Mammalia</taxon>
        <taxon>Eutheria</taxon>
        <taxon>Euarchontoglires</taxon>
        <taxon>Glires</taxon>
        <taxon>Rodentia</taxon>
        <taxon>Myomorpha</taxon>
        <taxon>Muroidea</taxon>
        <taxon>Muridae</taxon>
        <taxon>Murinae</taxon>
        <taxon>Mus</taxon>
        <taxon>Mus</taxon>
    </lineage>
</organism>
<protein>
    <recommendedName>
        <fullName evidence="8">E3 ubiquitin-protein ligase RNF123</fullName>
        <ecNumber evidence="2">2.3.2.27</ecNumber>
    </recommendedName>
    <alternativeName>
        <fullName evidence="7">Kip1 ubiquitination-promoting complex protein 1</fullName>
    </alternativeName>
    <alternativeName>
        <fullName>RING finger protein 123</fullName>
    </alternativeName>
</protein>
<reference key="1">
    <citation type="journal article" date="2004" name="Nat. Cell Biol.">
        <title>Cytoplasmic ubiquitin ligase KPC regulates proteolysis of p27(Kip1) at G1 phase.</title>
        <authorList>
            <person name="Kamura T."/>
            <person name="Hara T."/>
            <person name="Matsumoto M."/>
            <person name="Ishida N."/>
            <person name="Okumura F."/>
            <person name="Hatakeyama S."/>
            <person name="Yoshida M."/>
            <person name="Nakayama K."/>
            <person name="Nakayama K."/>
        </authorList>
    </citation>
    <scope>NUCLEOTIDE SEQUENCE [MRNA] (ISOFORM 1)</scope>
    <source>
        <strain>C57BL/6J</strain>
    </source>
</reference>
<reference key="2">
    <citation type="journal article" date="2004" name="Genome Res.">
        <title>The status, quality, and expansion of the NIH full-length cDNA project: the Mammalian Gene Collection (MGC).</title>
        <authorList>
            <consortium name="The MGC Project Team"/>
        </authorList>
    </citation>
    <scope>NUCLEOTIDE SEQUENCE [LARGE SCALE MRNA] (ISOFORM 2)</scope>
    <source>
        <strain>C57BL/6J</strain>
        <tissue>Brain</tissue>
    </source>
</reference>
<reference key="3">
    <citation type="journal article" date="2010" name="Cell">
        <title>A tissue-specific atlas of mouse protein phosphorylation and expression.</title>
        <authorList>
            <person name="Huttlin E.L."/>
            <person name="Jedrychowski M.P."/>
            <person name="Elias J.E."/>
            <person name="Goswami T."/>
            <person name="Rad R."/>
            <person name="Beausoleil S.A."/>
            <person name="Villen J."/>
            <person name="Haas W."/>
            <person name="Sowa M.E."/>
            <person name="Gygi S.P."/>
        </authorList>
    </citation>
    <scope>IDENTIFICATION BY MASS SPECTROMETRY [LARGE SCALE ANALYSIS]</scope>
    <source>
        <tissue>Brain</tissue>
        <tissue>Brown adipose tissue</tissue>
        <tissue>Heart</tissue>
        <tissue>Liver</tissue>
        <tissue>Lung</tissue>
        <tissue>Pancreas</tissue>
        <tissue>Spleen</tissue>
        <tissue>Testis</tissue>
    </source>
</reference>
<reference key="4">
    <citation type="journal article" date="2014" name="Mol. Cell. Proteomics">
        <title>Immunoaffinity enrichment and mass spectrometry analysis of protein methylation.</title>
        <authorList>
            <person name="Guo A."/>
            <person name="Gu H."/>
            <person name="Zhou J."/>
            <person name="Mulhern D."/>
            <person name="Wang Y."/>
            <person name="Lee K.A."/>
            <person name="Yang V."/>
            <person name="Aguiar M."/>
            <person name="Kornhauser J."/>
            <person name="Jia X."/>
            <person name="Ren J."/>
            <person name="Beausoleil S.A."/>
            <person name="Silva J.C."/>
            <person name="Vemulapalli V."/>
            <person name="Bedford M.T."/>
            <person name="Comb M.J."/>
        </authorList>
    </citation>
    <scope>METHYLATION [LARGE SCALE ANALYSIS] AT ARG-683</scope>
    <scope>IDENTIFICATION BY MASS SPECTROMETRY [LARGE SCALE ANALYSIS]</scope>
    <source>
        <tissue>Embryo</tissue>
    </source>
</reference>
<evidence type="ECO:0000250" key="1">
    <source>
        <dbReference type="UniProtKB" id="D3ZXK7"/>
    </source>
</evidence>
<evidence type="ECO:0000250" key="2">
    <source>
        <dbReference type="UniProtKB" id="Q5XPI4"/>
    </source>
</evidence>
<evidence type="ECO:0000255" key="3">
    <source>
        <dbReference type="PROSITE-ProRule" id="PRU00175"/>
    </source>
</evidence>
<evidence type="ECO:0000255" key="4">
    <source>
        <dbReference type="PROSITE-ProRule" id="PRU00548"/>
    </source>
</evidence>
<evidence type="ECO:0000256" key="5">
    <source>
        <dbReference type="SAM" id="MobiDB-lite"/>
    </source>
</evidence>
<evidence type="ECO:0000303" key="6">
    <source>
    </source>
</evidence>
<evidence type="ECO:0000303" key="7">
    <source>
    </source>
</evidence>
<evidence type="ECO:0000305" key="8"/>
<evidence type="ECO:0007744" key="9">
    <source>
    </source>
</evidence>
<feature type="initiator methionine" description="Removed" evidence="2">
    <location>
        <position position="1"/>
    </location>
</feature>
<feature type="chain" id="PRO_0000250448" description="E3 ubiquitin-protein ligase RNF123">
    <location>
        <begin position="2"/>
        <end position="1314"/>
    </location>
</feature>
<feature type="domain" description="B30.2/SPRY" evidence="4">
    <location>
        <begin position="74"/>
        <end position="254"/>
    </location>
</feature>
<feature type="zinc finger region" description="RING-type" evidence="3">
    <location>
        <begin position="1254"/>
        <end position="1292"/>
    </location>
</feature>
<feature type="region of interest" description="Disordered" evidence="5">
    <location>
        <begin position="460"/>
        <end position="483"/>
    </location>
</feature>
<feature type="region of interest" description="Interaction with NFKB1" evidence="2">
    <location>
        <begin position="968"/>
        <end position="974"/>
    </location>
</feature>
<feature type="compositionally biased region" description="Basic and acidic residues" evidence="5">
    <location>
        <begin position="462"/>
        <end position="483"/>
    </location>
</feature>
<feature type="binding site" evidence="2">
    <location>
        <position position="1254"/>
    </location>
    <ligand>
        <name>Zn(2+)</name>
        <dbReference type="ChEBI" id="CHEBI:29105"/>
        <label>1</label>
    </ligand>
</feature>
<feature type="binding site" evidence="2">
    <location>
        <position position="1257"/>
    </location>
    <ligand>
        <name>Zn(2+)</name>
        <dbReference type="ChEBI" id="CHEBI:29105"/>
        <label>1</label>
    </ligand>
</feature>
<feature type="binding site" evidence="2">
    <location>
        <position position="1269"/>
    </location>
    <ligand>
        <name>Zn(2+)</name>
        <dbReference type="ChEBI" id="CHEBI:29105"/>
        <label>2</label>
    </ligand>
</feature>
<feature type="binding site" evidence="2">
    <location>
        <position position="1271"/>
    </location>
    <ligand>
        <name>Zn(2+)</name>
        <dbReference type="ChEBI" id="CHEBI:29105"/>
        <label>2</label>
    </ligand>
</feature>
<feature type="binding site" evidence="2">
    <location>
        <position position="1274"/>
    </location>
    <ligand>
        <name>Zn(2+)</name>
        <dbReference type="ChEBI" id="CHEBI:29105"/>
        <label>1</label>
    </ligand>
</feature>
<feature type="binding site" evidence="2">
    <location>
        <position position="1277"/>
    </location>
    <ligand>
        <name>Zn(2+)</name>
        <dbReference type="ChEBI" id="CHEBI:29105"/>
        <label>1</label>
    </ligand>
</feature>
<feature type="binding site" evidence="2">
    <location>
        <position position="1288"/>
    </location>
    <ligand>
        <name>Zn(2+)</name>
        <dbReference type="ChEBI" id="CHEBI:29105"/>
        <label>2</label>
    </ligand>
</feature>
<feature type="binding site" evidence="2">
    <location>
        <position position="1291"/>
    </location>
    <ligand>
        <name>Zn(2+)</name>
        <dbReference type="ChEBI" id="CHEBI:29105"/>
        <label>2</label>
    </ligand>
</feature>
<feature type="modified residue" description="N-acetylalanine" evidence="2">
    <location>
        <position position="2"/>
    </location>
</feature>
<feature type="modified residue" description="Phosphoserine" evidence="1">
    <location>
        <position position="675"/>
    </location>
</feature>
<feature type="modified residue" description="Asymmetric dimethylarginine" evidence="9">
    <location>
        <position position="683"/>
    </location>
</feature>
<feature type="splice variant" id="VSP_020651" description="In isoform 2." evidence="6">
    <original>Q</original>
    <variation>QVWQEGQ</variation>
    <location>
        <position position="653"/>
    </location>
</feature>
<keyword id="KW-0007">Acetylation</keyword>
<keyword id="KW-0025">Alternative splicing</keyword>
<keyword id="KW-0963">Cytoplasm</keyword>
<keyword id="KW-0479">Metal-binding</keyword>
<keyword id="KW-0488">Methylation</keyword>
<keyword id="KW-0597">Phosphoprotein</keyword>
<keyword id="KW-1185">Reference proteome</keyword>
<keyword id="KW-0808">Transferase</keyword>
<keyword id="KW-0832">Ubl conjugation</keyword>
<keyword id="KW-0833">Ubl conjugation pathway</keyword>
<keyword id="KW-0862">Zinc</keyword>
<keyword id="KW-0863">Zinc-finger</keyword>
<name>RN123_MOUSE</name>
<proteinExistence type="evidence at protein level"/>